<comment type="similarity">
    <text evidence="2">Belongs to the thiolase-like superfamily. Thiolase family.</text>
</comment>
<reference key="1">
    <citation type="journal article" date="2005" name="J. Bacteriol.">
        <title>Insights on evolution of virulence and resistance from the complete genome analysis of an early methicillin-resistant Staphylococcus aureus strain and a biofilm-producing methicillin-resistant Staphylococcus epidermidis strain.</title>
        <authorList>
            <person name="Gill S.R."/>
            <person name="Fouts D.E."/>
            <person name="Archer G.L."/>
            <person name="Mongodin E.F."/>
            <person name="DeBoy R.T."/>
            <person name="Ravel J."/>
            <person name="Paulsen I.T."/>
            <person name="Kolonay J.F."/>
            <person name="Brinkac L.M."/>
            <person name="Beanan M.J."/>
            <person name="Dodson R.J."/>
            <person name="Daugherty S.C."/>
            <person name="Madupu R."/>
            <person name="Angiuoli S.V."/>
            <person name="Durkin A.S."/>
            <person name="Haft D.H."/>
            <person name="Vamathevan J.J."/>
            <person name="Khouri H."/>
            <person name="Utterback T.R."/>
            <person name="Lee C."/>
            <person name="Dimitrov G."/>
            <person name="Jiang L."/>
            <person name="Qin H."/>
            <person name="Weidman J."/>
            <person name="Tran K."/>
            <person name="Kang K.H."/>
            <person name="Hance I.R."/>
            <person name="Nelson K.E."/>
            <person name="Fraser C.M."/>
        </authorList>
    </citation>
    <scope>NUCLEOTIDE SEQUENCE [LARGE SCALE GENOMIC DNA]</scope>
    <source>
        <strain>ATCC 35984 / DSM 28319 / BCRC 17069 / CCUG 31568 / BM 3577 / RP62A</strain>
    </source>
</reference>
<organism>
    <name type="scientific">Staphylococcus epidermidis (strain ATCC 35984 / DSM 28319 / BCRC 17069 / CCUG 31568 / BM 3577 / RP62A)</name>
    <dbReference type="NCBI Taxonomy" id="176279"/>
    <lineage>
        <taxon>Bacteria</taxon>
        <taxon>Bacillati</taxon>
        <taxon>Bacillota</taxon>
        <taxon>Bacilli</taxon>
        <taxon>Bacillales</taxon>
        <taxon>Staphylococcaceae</taxon>
        <taxon>Staphylococcus</taxon>
    </lineage>
</organism>
<accession>Q5HRH3</accession>
<gene>
    <name type="primary">vraB</name>
    <name type="ordered locus">SERP0220</name>
</gene>
<protein>
    <recommendedName>
        <fullName>Putative acetyl-CoA C-acetyltransferase VraB</fullName>
        <ecNumber>2.3.1.-</ecNumber>
    </recommendedName>
</protein>
<dbReference type="EC" id="2.3.1.-"/>
<dbReference type="EMBL" id="CP000029">
    <property type="protein sequence ID" value="AAW53600.1"/>
    <property type="molecule type" value="Genomic_DNA"/>
</dbReference>
<dbReference type="RefSeq" id="WP_002445760.1">
    <property type="nucleotide sequence ID" value="NC_002976.3"/>
</dbReference>
<dbReference type="SMR" id="Q5HRH3"/>
<dbReference type="STRING" id="176279.SERP0220"/>
<dbReference type="KEGG" id="ser:SERP0220"/>
<dbReference type="eggNOG" id="COG0183">
    <property type="taxonomic scope" value="Bacteria"/>
</dbReference>
<dbReference type="HOGENOM" id="CLU_031026_2_1_9"/>
<dbReference type="Proteomes" id="UP000000531">
    <property type="component" value="Chromosome"/>
</dbReference>
<dbReference type="GO" id="GO:0005737">
    <property type="term" value="C:cytoplasm"/>
    <property type="evidence" value="ECO:0007669"/>
    <property type="project" value="UniProtKB-ARBA"/>
</dbReference>
<dbReference type="GO" id="GO:0003988">
    <property type="term" value="F:acetyl-CoA C-acyltransferase activity"/>
    <property type="evidence" value="ECO:0007669"/>
    <property type="project" value="TreeGrafter"/>
</dbReference>
<dbReference type="GO" id="GO:0006635">
    <property type="term" value="P:fatty acid beta-oxidation"/>
    <property type="evidence" value="ECO:0007669"/>
    <property type="project" value="TreeGrafter"/>
</dbReference>
<dbReference type="GO" id="GO:0010124">
    <property type="term" value="P:phenylacetate catabolic process"/>
    <property type="evidence" value="ECO:0007669"/>
    <property type="project" value="TreeGrafter"/>
</dbReference>
<dbReference type="CDD" id="cd00751">
    <property type="entry name" value="thiolase"/>
    <property type="match status" value="1"/>
</dbReference>
<dbReference type="Gene3D" id="3.40.47.10">
    <property type="match status" value="2"/>
</dbReference>
<dbReference type="InterPro" id="IPR002155">
    <property type="entry name" value="Thiolase"/>
</dbReference>
<dbReference type="InterPro" id="IPR016039">
    <property type="entry name" value="Thiolase-like"/>
</dbReference>
<dbReference type="InterPro" id="IPR050215">
    <property type="entry name" value="Thiolase-like_sf_Thiolase"/>
</dbReference>
<dbReference type="InterPro" id="IPR020617">
    <property type="entry name" value="Thiolase_C"/>
</dbReference>
<dbReference type="InterPro" id="IPR020613">
    <property type="entry name" value="Thiolase_CS"/>
</dbReference>
<dbReference type="InterPro" id="IPR020616">
    <property type="entry name" value="Thiolase_N"/>
</dbReference>
<dbReference type="NCBIfam" id="TIGR01930">
    <property type="entry name" value="AcCoA-C-Actrans"/>
    <property type="match status" value="1"/>
</dbReference>
<dbReference type="PANTHER" id="PTHR43853">
    <property type="entry name" value="3-KETOACYL-COA THIOLASE, PEROXISOMAL"/>
    <property type="match status" value="1"/>
</dbReference>
<dbReference type="PANTHER" id="PTHR43853:SF3">
    <property type="entry name" value="ACETYL-COA C-ACETYLTRANSFERASE YHFS-RELATED"/>
    <property type="match status" value="1"/>
</dbReference>
<dbReference type="Pfam" id="PF02803">
    <property type="entry name" value="Thiolase_C"/>
    <property type="match status" value="1"/>
</dbReference>
<dbReference type="Pfam" id="PF00108">
    <property type="entry name" value="Thiolase_N"/>
    <property type="match status" value="1"/>
</dbReference>
<dbReference type="PIRSF" id="PIRSF000429">
    <property type="entry name" value="Ac-CoA_Ac_transf"/>
    <property type="match status" value="1"/>
</dbReference>
<dbReference type="SUPFAM" id="SSF53901">
    <property type="entry name" value="Thiolase-like"/>
    <property type="match status" value="2"/>
</dbReference>
<dbReference type="PROSITE" id="PS00737">
    <property type="entry name" value="THIOLASE_2"/>
    <property type="match status" value="1"/>
</dbReference>
<keyword id="KW-0012">Acyltransferase</keyword>
<keyword id="KW-1185">Reference proteome</keyword>
<keyword id="KW-0808">Transferase</keyword>
<name>VRAB_STAEQ</name>
<sequence length="382" mass="41803">MKQPVIIAAKRIAFGKYGGRLKHLEPESLLEPLFNHFTDQYPKVMSLLDDVILGNTVGNGGNLARKSLLEAGLDFKIPGITIDRQCGSGLEAVIQACRMVQSGAGTIYIAGGVESTSRAPWKIKRPQSVYESEFPQFFERAPFAREGEDPSMIEAAENVAKKYHISRNEQDDFAYRSHQLASKNMNNGNISQEILPFKVKGECFNQDESIKPQLTLKTLGRLKPLLNEGTVTVGNSCMKNDGAVLLIVMEENRARQLGFTEGIKFVNSATVGVQPQYLGVGPVPAVNQLLARERLTINDINAVELNEAFSSQVIASQQQLNIPLNKLNCWGGAIATGHPYGASGAALVTRLFYMKHQFRTVATMGIGGGIGNAALFERWYGN</sequence>
<proteinExistence type="inferred from homology"/>
<evidence type="ECO:0000250" key="1"/>
<evidence type="ECO:0000305" key="2"/>
<feature type="chain" id="PRO_0000206433" description="Putative acetyl-CoA C-acetyltransferase VraB">
    <location>
        <begin position="1"/>
        <end position="382"/>
    </location>
</feature>
<feature type="active site" description="Acyl-thioester intermediate" evidence="1">
    <location>
        <position position="86"/>
    </location>
</feature>
<feature type="active site" description="Proton acceptor" evidence="1">
    <location>
        <position position="338"/>
    </location>
</feature>